<reference key="1">
    <citation type="journal article" date="1983" name="Nature">
        <title>Evolutionary adaptation of plasmid-encoded enzymes for degrading nylon oligomers.</title>
        <authorList>
            <person name="Okada H."/>
            <person name="Negoro S."/>
            <person name="Kimura H."/>
            <person name="Nakamura S."/>
        </authorList>
    </citation>
    <scope>NUCLEOTIDE SEQUENCE [GENOMIC DNA]</scope>
    <scope>FUNCTION</scope>
    <scope>PATHWAY</scope>
    <source>
        <strain>K172</strain>
    </source>
</reference>
<reference key="2">
    <citation type="journal article" date="1984" name="J. Biol. Chem.">
        <title>Construction of hybrid genes of 6-aminohexanoic acid-oligomer hydrolase and its analogous enzyme. Estimation of the intramolecular regions important for the enzyme evolution.</title>
        <authorList>
            <person name="Negoro S."/>
            <person name="Nakamura S."/>
            <person name="Kimura H."/>
            <person name="Fujiyama K."/>
            <person name="Zhang Y.Z."/>
            <person name="Kanzaki N."/>
            <person name="Okada H."/>
        </authorList>
    </citation>
    <scope>NUCLEOTIDE SEQUENCE [GENOMIC DNA]</scope>
    <scope>FUNCTION</scope>
</reference>
<reference key="3">
    <citation type="journal article" date="1989" name="Eur. J. Biochem.">
        <title>Determination of the active-site serine of 6-aminohexanoate-dimer hydrolase.</title>
        <authorList>
            <person name="Negoro S."/>
            <person name="Mitamura T."/>
            <person name="Oka K."/>
            <person name="Kanagawa K."/>
            <person name="Okada H."/>
        </authorList>
    </citation>
    <scope>PROTEIN SEQUENCE OF 108-115 AND 338-355</scope>
    <scope>ACTIVE SITE</scope>
</reference>
<comment type="function">
    <text evidence="3 4">Involved in nylon oligomer degradation.</text>
</comment>
<comment type="catalytic activity">
    <reaction evidence="6">
        <text>[N-(6-aminohexanoyl)](n) + H2O = [N-(6-aminohexanoyl)](n-1) + 6-aminohexanoate</text>
        <dbReference type="Rhea" id="RHEA:18225"/>
        <dbReference type="Rhea" id="RHEA-COMP:9820"/>
        <dbReference type="Rhea" id="RHEA-COMP:14302"/>
        <dbReference type="ChEBI" id="CHEBI:15377"/>
        <dbReference type="ChEBI" id="CHEBI:57826"/>
        <dbReference type="ChEBI" id="CHEBI:78629"/>
        <dbReference type="EC" id="3.5.1.46"/>
    </reaction>
</comment>
<comment type="catalytic activity">
    <reaction evidence="6">
        <text>N-(6-aminohexanoyl)-6-aminohexanoate + H2O = 2 6-aminohexanoate</text>
        <dbReference type="Rhea" id="RHEA:21364"/>
        <dbReference type="ChEBI" id="CHEBI:15377"/>
        <dbReference type="ChEBI" id="CHEBI:57826"/>
        <dbReference type="ChEBI" id="CHEBI:58798"/>
        <dbReference type="EC" id="3.5.1.46"/>
    </reaction>
</comment>
<comment type="pathway">
    <text evidence="7">Xenobiotic degradation; nylon-6 oligomer degradation.</text>
</comment>
<comment type="miscellaneous">
    <text evidence="4">The EII enzyme is 100 times more active toward the substrate than the EII' enzyme.</text>
</comment>
<accession>P07061</accession>
<geneLocation type="plasmid">
    <name>pOAD2</name>
</geneLocation>
<name>NYLB_PAEUR</name>
<dbReference type="EC" id="3.5.1.46" evidence="6"/>
<dbReference type="EMBL" id="X00046">
    <property type="protein sequence ID" value="CAA24927.1"/>
    <property type="molecule type" value="Genomic_DNA"/>
</dbReference>
<dbReference type="EMBL" id="D26094">
    <property type="protein sequence ID" value="BAA05087.1"/>
    <property type="molecule type" value="Genomic_DNA"/>
</dbReference>
<dbReference type="PIR" id="A29516">
    <property type="entry name" value="A29516"/>
</dbReference>
<dbReference type="PDB" id="2E8I">
    <property type="method" value="X-ray"/>
    <property type="resolution" value="1.45 A"/>
    <property type="chains" value="A=1-21"/>
</dbReference>
<dbReference type="PDB" id="2ZLY">
    <property type="method" value="X-ray"/>
    <property type="resolution" value="1.58 A"/>
    <property type="chains" value="A=1-21"/>
</dbReference>
<dbReference type="PDB" id="2ZM0">
    <property type="method" value="X-ray"/>
    <property type="resolution" value="1.50 A"/>
    <property type="chains" value="A=1-21"/>
</dbReference>
<dbReference type="PDB" id="2ZM2">
    <property type="method" value="X-ray"/>
    <property type="resolution" value="1.55 A"/>
    <property type="chains" value="A=1-21"/>
</dbReference>
<dbReference type="PDB" id="2ZM7">
    <property type="method" value="X-ray"/>
    <property type="resolution" value="1.60 A"/>
    <property type="chains" value="A=1-21"/>
</dbReference>
<dbReference type="PDB" id="2ZM8">
    <property type="method" value="X-ray"/>
    <property type="resolution" value="1.55 A"/>
    <property type="chains" value="A=1-21"/>
</dbReference>
<dbReference type="PDB" id="2ZM9">
    <property type="method" value="X-ray"/>
    <property type="resolution" value="1.50 A"/>
    <property type="chains" value="A=1-21"/>
</dbReference>
<dbReference type="PDB" id="2ZMA">
    <property type="method" value="X-ray"/>
    <property type="resolution" value="1.51 A"/>
    <property type="chains" value="A=1-21"/>
</dbReference>
<dbReference type="PDB" id="3A65">
    <property type="method" value="X-ray"/>
    <property type="resolution" value="1.70 A"/>
    <property type="chains" value="A=1-21"/>
</dbReference>
<dbReference type="PDB" id="3A66">
    <property type="method" value="X-ray"/>
    <property type="resolution" value="1.60 A"/>
    <property type="chains" value="A=1-21"/>
</dbReference>
<dbReference type="PDB" id="3VWL">
    <property type="method" value="X-ray"/>
    <property type="resolution" value="1.60 A"/>
    <property type="chains" value="A=1-21"/>
</dbReference>
<dbReference type="PDB" id="3VWM">
    <property type="method" value="X-ray"/>
    <property type="resolution" value="1.60 A"/>
    <property type="chains" value="A=1-21"/>
</dbReference>
<dbReference type="PDB" id="3VWN">
    <property type="method" value="X-ray"/>
    <property type="resolution" value="1.20 A"/>
    <property type="chains" value="X=1-21"/>
</dbReference>
<dbReference type="PDB" id="3VWP">
    <property type="method" value="X-ray"/>
    <property type="resolution" value="1.55 A"/>
    <property type="chains" value="A=1-21"/>
</dbReference>
<dbReference type="PDB" id="3VWQ">
    <property type="method" value="X-ray"/>
    <property type="resolution" value="1.70 A"/>
    <property type="chains" value="A=1-21"/>
</dbReference>
<dbReference type="PDB" id="3VWR">
    <property type="method" value="X-ray"/>
    <property type="resolution" value="1.65 A"/>
    <property type="chains" value="A=1-21"/>
</dbReference>
<dbReference type="PDBsum" id="2E8I"/>
<dbReference type="PDBsum" id="2ZLY"/>
<dbReference type="PDBsum" id="2ZM0"/>
<dbReference type="PDBsum" id="2ZM2"/>
<dbReference type="PDBsum" id="2ZM7"/>
<dbReference type="PDBsum" id="2ZM8"/>
<dbReference type="PDBsum" id="2ZM9"/>
<dbReference type="PDBsum" id="2ZMA"/>
<dbReference type="PDBsum" id="3A65"/>
<dbReference type="PDBsum" id="3A66"/>
<dbReference type="PDBsum" id="3VWL"/>
<dbReference type="PDBsum" id="3VWM"/>
<dbReference type="PDBsum" id="3VWN"/>
<dbReference type="PDBsum" id="3VWP"/>
<dbReference type="PDBsum" id="3VWQ"/>
<dbReference type="PDBsum" id="3VWR"/>
<dbReference type="SMR" id="P07061"/>
<dbReference type="KEGG" id="ag:BAA05087"/>
<dbReference type="BioCyc" id="MetaCyc:MONOMER-5405"/>
<dbReference type="BRENDA" id="3.5.1.46">
    <property type="organism ID" value="460"/>
</dbReference>
<dbReference type="UniPathway" id="UPA00207"/>
<dbReference type="GO" id="GO:0019875">
    <property type="term" value="F:6-aminohexanoate-dimer hydrolase activity"/>
    <property type="evidence" value="ECO:0000314"/>
    <property type="project" value="CACAO"/>
</dbReference>
<dbReference type="GO" id="GO:0019876">
    <property type="term" value="P:nylon catabolic process"/>
    <property type="evidence" value="ECO:0007669"/>
    <property type="project" value="UniProtKB-KW"/>
</dbReference>
<dbReference type="FunFam" id="3.40.710.10:FF:000175">
    <property type="entry name" value="6-aminohexanoate-dimer hydrolase"/>
    <property type="match status" value="2"/>
</dbReference>
<dbReference type="Gene3D" id="6.10.250.420">
    <property type="match status" value="1"/>
</dbReference>
<dbReference type="Gene3D" id="3.40.710.10">
    <property type="entry name" value="DD-peptidase/beta-lactamase superfamily"/>
    <property type="match status" value="2"/>
</dbReference>
<dbReference type="InterPro" id="IPR001466">
    <property type="entry name" value="Beta-lactam-related"/>
</dbReference>
<dbReference type="InterPro" id="IPR012338">
    <property type="entry name" value="Beta-lactam/transpept-like"/>
</dbReference>
<dbReference type="InterPro" id="IPR050789">
    <property type="entry name" value="Diverse_Enzym_Activities"/>
</dbReference>
<dbReference type="PANTHER" id="PTHR43283">
    <property type="entry name" value="BETA-LACTAMASE-RELATED"/>
    <property type="match status" value="1"/>
</dbReference>
<dbReference type="PANTHER" id="PTHR43283:SF7">
    <property type="entry name" value="BETA-LACTAMASE-RELATED DOMAIN-CONTAINING PROTEIN"/>
    <property type="match status" value="1"/>
</dbReference>
<dbReference type="Pfam" id="PF00144">
    <property type="entry name" value="Beta-lactamase"/>
    <property type="match status" value="1"/>
</dbReference>
<dbReference type="SUPFAM" id="SSF56601">
    <property type="entry name" value="beta-lactamase/transpeptidase-like"/>
    <property type="match status" value="1"/>
</dbReference>
<keyword id="KW-0002">3D-structure</keyword>
<keyword id="KW-0903">Direct protein sequencing</keyword>
<keyword id="KW-0378">Hydrolase</keyword>
<keyword id="KW-0549">Nylon degradation</keyword>
<keyword id="KW-0614">Plasmid</keyword>
<feature type="chain" id="PRO_0000058011" description="6-aminohexanoate-dimer hydrolase">
    <location>
        <begin position="1"/>
        <end position="392"/>
    </location>
</feature>
<feature type="region of interest" description="Disordered" evidence="1">
    <location>
        <begin position="1"/>
        <end position="22"/>
    </location>
</feature>
<feature type="active site" evidence="2">
    <location>
        <position position="112"/>
    </location>
</feature>
<feature type="turn" evidence="8">
    <location>
        <begin position="23"/>
        <end position="27"/>
    </location>
</feature>
<feature type="helix" evidence="9">
    <location>
        <begin position="181"/>
        <end position="184"/>
    </location>
</feature>
<feature type="helix" evidence="8">
    <location>
        <begin position="197"/>
        <end position="202"/>
    </location>
</feature>
<feature type="strand" evidence="8">
    <location>
        <begin position="269"/>
        <end position="271"/>
    </location>
</feature>
<feature type="helix" evidence="8">
    <location>
        <begin position="273"/>
        <end position="284"/>
    </location>
</feature>
<feature type="turn" evidence="8">
    <location>
        <begin position="285"/>
        <end position="287"/>
    </location>
</feature>
<organism>
    <name type="scientific">Paenarthrobacter ureafaciens</name>
    <dbReference type="NCBI Taxonomy" id="37931"/>
    <lineage>
        <taxon>Bacteria</taxon>
        <taxon>Bacillati</taxon>
        <taxon>Actinomycetota</taxon>
        <taxon>Actinomycetes</taxon>
        <taxon>Micrococcales</taxon>
        <taxon>Micrococcaceae</taxon>
        <taxon>Paenarthrobacter</taxon>
    </lineage>
</organism>
<sequence>MNARSTGQHPARYPGAAAGEPTLDSWQEAPHNRWAFARLGELLPTAAVSRRDPATPAEPVVRLDALATRLPDLEQRLEETCTDAFLVLRGSEVLAEYYRAGFAPDDRHLLMSVSKSLCGTVVGALIDEGRIDPAQPVTEYVPELAGSVYDGPSVLQVLDMQISIDYNEDYVDPASEVQTHDRSAGWRTRRDGDPADTYEFLTTLRGDGGTGEFQYCSANTDVLAWIVERVTGLRYVEALSTYLWAKLDADRDATITVDQTGFGFANGGVSCTARDLARVGRMMLDGGVAPGGRVVSQGWVESVLAGGSREAMTDEGFTSAFPEGSYTRQWWCTGNERGNVSGIGIHGQNLWLDPRTDSVIVKLSSWPDPDTRHWHGLQSGILLDVSRALDAV</sequence>
<evidence type="ECO:0000256" key="1">
    <source>
        <dbReference type="SAM" id="MobiDB-lite"/>
    </source>
</evidence>
<evidence type="ECO:0000269" key="2">
    <source>
    </source>
</evidence>
<evidence type="ECO:0000269" key="3">
    <source>
    </source>
</evidence>
<evidence type="ECO:0000269" key="4">
    <source>
    </source>
</evidence>
<evidence type="ECO:0000303" key="5">
    <source>
    </source>
</evidence>
<evidence type="ECO:0000305" key="6">
    <source>
    </source>
</evidence>
<evidence type="ECO:0000305" key="7">
    <source>
    </source>
</evidence>
<evidence type="ECO:0007829" key="8">
    <source>
        <dbReference type="PDB" id="3VWN"/>
    </source>
</evidence>
<evidence type="ECO:0007829" key="9">
    <source>
        <dbReference type="PDB" id="3VWP"/>
    </source>
</evidence>
<proteinExistence type="evidence at protein level"/>
<protein>
    <recommendedName>
        <fullName>6-aminohexanoate-dimer hydrolase</fullName>
        <ecNumber evidence="6">3.5.1.46</ecNumber>
    </recommendedName>
    <alternativeName>
        <fullName evidence="5">6-aminohexanoic acid linear oligomer hydrolase</fullName>
    </alternativeName>
    <alternativeName>
        <fullName>Nylon oligomers-degrading enzyme EII</fullName>
    </alternativeName>
</protein>
<gene>
    <name evidence="5" type="primary">nylB</name>
</gene>